<keyword id="KW-1003">Cell membrane</keyword>
<keyword id="KW-0903">Direct protein sequencing</keyword>
<keyword id="KW-0256">Endoplasmic reticulum</keyword>
<keyword id="KW-0444">Lipid biosynthesis</keyword>
<keyword id="KW-0443">Lipid metabolism</keyword>
<keyword id="KW-0460">Magnesium</keyword>
<keyword id="KW-0464">Manganese</keyword>
<keyword id="KW-0472">Membrane</keyword>
<keyword id="KW-0479">Metal-binding</keyword>
<keyword id="KW-0594">Phospholipid biosynthesis</keyword>
<keyword id="KW-1208">Phospholipid metabolism</keyword>
<keyword id="KW-1185">Reference proteome</keyword>
<keyword id="KW-0808">Transferase</keyword>
<keyword id="KW-0812">Transmembrane</keyword>
<keyword id="KW-1133">Transmembrane helix</keyword>
<comment type="function">
    <text evidence="1">Catalyzes the biosynthesis of phosphatidylinositol (PtdIns) as well as PtdIns:inositol exchange reaction. May thus act to reduce an excessive cellular PtdIns content. The exchange activity is due to the reverse reaction of PtdIns synthase and is dependent on CMP, which is tightly bound to the enzyme.</text>
</comment>
<comment type="catalytic activity">
    <reaction evidence="1">
        <text>a CDP-1,2-diacyl-sn-glycerol + myo-inositol = a 1,2-diacyl-sn-glycero-3-phospho-(1D-myo-inositol) + CMP + H(+)</text>
        <dbReference type="Rhea" id="RHEA:11580"/>
        <dbReference type="ChEBI" id="CHEBI:15378"/>
        <dbReference type="ChEBI" id="CHEBI:17268"/>
        <dbReference type="ChEBI" id="CHEBI:57880"/>
        <dbReference type="ChEBI" id="CHEBI:58332"/>
        <dbReference type="ChEBI" id="CHEBI:60377"/>
        <dbReference type="EC" id="2.7.8.11"/>
    </reaction>
    <physiologicalReaction direction="left-to-right" evidence="1">
        <dbReference type="Rhea" id="RHEA:11581"/>
    </physiologicalReaction>
    <physiologicalReaction direction="right-to-left" evidence="1">
        <dbReference type="Rhea" id="RHEA:11582"/>
    </physiologicalReaction>
</comment>
<comment type="cofactor">
    <cofactor evidence="1">
        <name>Mn(2+)</name>
        <dbReference type="ChEBI" id="CHEBI:29035"/>
    </cofactor>
    <cofactor evidence="1">
        <name>Mg(2+)</name>
        <dbReference type="ChEBI" id="CHEBI:18420"/>
    </cofactor>
    <text evidence="1">Catalytic activity is higher with Mg(2+).</text>
</comment>
<comment type="subcellular location">
    <subcellularLocation>
        <location evidence="1">Endoplasmic reticulum membrane</location>
        <topology evidence="4">Multi-pass membrane protein</topology>
    </subcellularLocation>
    <subcellularLocation>
        <location evidence="1">Cell membrane</location>
        <topology evidence="4">Multi-pass membrane protein</topology>
    </subcellularLocation>
</comment>
<comment type="similarity">
    <text evidence="5">Belongs to the CDP-alcohol phosphatidyltransferase class-I family.</text>
</comment>
<name>CDIPT_MOUSE</name>
<proteinExistence type="evidence at protein level"/>
<feature type="chain" id="PRO_0000056803" description="CDP-diacylglycerol--inositol 3-phosphatidyltransferase">
    <location>
        <begin position="1"/>
        <end position="213"/>
    </location>
</feature>
<feature type="topological domain" description="Cytoplasmic" evidence="5">
    <location>
        <begin position="1"/>
        <end position="5"/>
    </location>
</feature>
<feature type="transmembrane region" description="Helical" evidence="4">
    <location>
        <begin position="6"/>
        <end position="26"/>
    </location>
</feature>
<feature type="topological domain" description="Lumenal" evidence="5">
    <location>
        <position position="27"/>
    </location>
</feature>
<feature type="transmembrane region" description="Helical" evidence="4">
    <location>
        <begin position="28"/>
        <end position="48"/>
    </location>
</feature>
<feature type="topological domain" description="Cytoplasmic" evidence="5">
    <location>
        <begin position="49"/>
        <end position="73"/>
    </location>
</feature>
<feature type="transmembrane region" description="Helical" evidence="4">
    <location>
        <begin position="74"/>
        <end position="94"/>
    </location>
</feature>
<feature type="topological domain" description="Lumenal" evidence="5">
    <location>
        <position position="95"/>
    </location>
</feature>
<feature type="transmembrane region" description="Helical" evidence="5">
    <location>
        <begin position="96"/>
        <end position="116"/>
    </location>
</feature>
<feature type="topological domain" description="Cytoplasmic" evidence="5">
    <location>
        <begin position="117"/>
        <end position="139"/>
    </location>
</feature>
<feature type="transmembrane region" description="Helical" evidence="4">
    <location>
        <begin position="140"/>
        <end position="160"/>
    </location>
</feature>
<feature type="topological domain" description="Lumenal" evidence="5">
    <location>
        <begin position="161"/>
        <end position="174"/>
    </location>
</feature>
<feature type="transmembrane region" description="Helical" evidence="4">
    <location>
        <begin position="175"/>
        <end position="195"/>
    </location>
</feature>
<feature type="topological domain" description="Cytoplasmic" evidence="5">
    <location>
        <begin position="196"/>
        <end position="213"/>
    </location>
</feature>
<feature type="active site" description="Proton acceptor" evidence="3">
    <location>
        <position position="72"/>
    </location>
</feature>
<feature type="binding site" evidence="3">
    <location>
        <position position="47"/>
    </location>
    <ligand>
        <name>Mg(2+)</name>
        <dbReference type="ChEBI" id="CHEBI:18420"/>
        <label>1</label>
    </ligand>
</feature>
<feature type="binding site" evidence="3">
    <location>
        <position position="47"/>
    </location>
    <ligand>
        <name>Mg(2+)</name>
        <dbReference type="ChEBI" id="CHEBI:18420"/>
        <label>2</label>
    </ligand>
</feature>
<feature type="binding site" evidence="3">
    <location>
        <position position="50"/>
    </location>
    <ligand>
        <name>Mg(2+)</name>
        <dbReference type="ChEBI" id="CHEBI:18420"/>
        <label>1</label>
    </ligand>
</feature>
<feature type="binding site" evidence="3">
    <location>
        <position position="51"/>
    </location>
    <ligand>
        <name>a CDP-1,2-diacyl-sn-glycerol</name>
        <dbReference type="ChEBI" id="CHEBI:58332"/>
    </ligand>
</feature>
<feature type="binding site" evidence="3">
    <location>
        <position position="55"/>
    </location>
    <ligand>
        <name>a CDP-1,2-diacyl-sn-glycerol</name>
        <dbReference type="ChEBI" id="CHEBI:58332"/>
    </ligand>
</feature>
<feature type="binding site" evidence="3">
    <location>
        <position position="61"/>
    </location>
    <ligand>
        <name>a CDP-1,2-diacyl-sn-glycerol</name>
        <dbReference type="ChEBI" id="CHEBI:58332"/>
    </ligand>
</feature>
<feature type="binding site" evidence="3">
    <location>
        <position position="68"/>
    </location>
    <ligand>
        <name>Mg(2+)</name>
        <dbReference type="ChEBI" id="CHEBI:18420"/>
        <label>1</label>
    </ligand>
</feature>
<feature type="binding site" evidence="3">
    <location>
        <position position="68"/>
    </location>
    <ligand>
        <name>Mg(2+)</name>
        <dbReference type="ChEBI" id="CHEBI:18420"/>
        <label>2</label>
    </ligand>
</feature>
<feature type="binding site" evidence="3">
    <location>
        <position position="72"/>
    </location>
    <ligand>
        <name>Mg(2+)</name>
        <dbReference type="ChEBI" id="CHEBI:18420"/>
        <label>2</label>
    </ligand>
</feature>
<accession>Q8VDP6</accession>
<protein>
    <recommendedName>
        <fullName evidence="5">CDP-diacylglycerol--inositol 3-phosphatidyltransferase</fullName>
        <ecNumber evidence="1 2">2.7.8.11</ecNumber>
    </recommendedName>
    <alternativeName>
        <fullName>Phosphatidylinositol synthase</fullName>
        <shortName>PI synthase</shortName>
        <shortName>PtdIns synthase</shortName>
    </alternativeName>
</protein>
<evidence type="ECO:0000250" key="1">
    <source>
        <dbReference type="UniProtKB" id="O14735"/>
    </source>
</evidence>
<evidence type="ECO:0000250" key="2">
    <source>
        <dbReference type="UniProtKB" id="P70500"/>
    </source>
</evidence>
<evidence type="ECO:0000250" key="3">
    <source>
        <dbReference type="UniProtKB" id="P9WPG7"/>
    </source>
</evidence>
<evidence type="ECO:0000255" key="4"/>
<evidence type="ECO:0000305" key="5"/>
<evidence type="ECO:0000312" key="6">
    <source>
        <dbReference type="MGI" id="MGI:105491"/>
    </source>
</evidence>
<organism>
    <name type="scientific">Mus musculus</name>
    <name type="common">Mouse</name>
    <dbReference type="NCBI Taxonomy" id="10090"/>
    <lineage>
        <taxon>Eukaryota</taxon>
        <taxon>Metazoa</taxon>
        <taxon>Chordata</taxon>
        <taxon>Craniata</taxon>
        <taxon>Vertebrata</taxon>
        <taxon>Euteleostomi</taxon>
        <taxon>Mammalia</taxon>
        <taxon>Eutheria</taxon>
        <taxon>Euarchontoglires</taxon>
        <taxon>Glires</taxon>
        <taxon>Rodentia</taxon>
        <taxon>Myomorpha</taxon>
        <taxon>Muroidea</taxon>
        <taxon>Muridae</taxon>
        <taxon>Murinae</taxon>
        <taxon>Mus</taxon>
        <taxon>Mus</taxon>
    </lineage>
</organism>
<sequence>MPEENIFLFVPNLIGYARIVFAIISFYFMPCCPFTASSFYLLSGLLDAFDGHAARALNQGTRFGAMLDMLTDRCATMCLLVNLALLYPRATLLFQLSMSLDVASHWLHLHSSVVRGSESHKMIDLSGNPVLRIYYTSRPALFTLCAGNELFYCLLYLFNFSEGPLVGSVGLFRMGLWVTAPIALLKSVISVIHLITAARNMAALDAADRAKKK</sequence>
<gene>
    <name evidence="6" type="primary">Cdipt</name>
    <name type="synonym">Pis1</name>
</gene>
<dbReference type="EC" id="2.7.8.11" evidence="1 2"/>
<dbReference type="EMBL" id="AK076974">
    <property type="protein sequence ID" value="BAC36542.1"/>
    <property type="molecule type" value="mRNA"/>
</dbReference>
<dbReference type="EMBL" id="AK079226">
    <property type="protein sequence ID" value="BAC37580.1"/>
    <property type="molecule type" value="mRNA"/>
</dbReference>
<dbReference type="EMBL" id="AK089109">
    <property type="protein sequence ID" value="BAC40756.1"/>
    <property type="molecule type" value="mRNA"/>
</dbReference>
<dbReference type="EMBL" id="BC021473">
    <property type="protein sequence ID" value="AAH21473.1"/>
    <property type="molecule type" value="mRNA"/>
</dbReference>
<dbReference type="EMBL" id="BC024413">
    <property type="protein sequence ID" value="AAH24413.1"/>
    <property type="molecule type" value="mRNA"/>
</dbReference>
<dbReference type="CCDS" id="CCDS21853.1"/>
<dbReference type="RefSeq" id="NP_080914.1">
    <property type="nucleotide sequence ID" value="NM_026638.4"/>
</dbReference>
<dbReference type="SMR" id="Q8VDP6"/>
<dbReference type="BioGRID" id="206858">
    <property type="interactions" value="13"/>
</dbReference>
<dbReference type="FunCoup" id="Q8VDP6">
    <property type="interactions" value="2436"/>
</dbReference>
<dbReference type="IntAct" id="Q8VDP6">
    <property type="interactions" value="1"/>
</dbReference>
<dbReference type="MINT" id="Q8VDP6"/>
<dbReference type="STRING" id="10090.ENSMUSP00000032920"/>
<dbReference type="ChEMBL" id="CHEMBL2176"/>
<dbReference type="GlyGen" id="Q8VDP6">
    <property type="glycosylation" value="1 site, 1 O-linked glycan (1 site)"/>
</dbReference>
<dbReference type="iPTMnet" id="Q8VDP6"/>
<dbReference type="PhosphoSitePlus" id="Q8VDP6"/>
<dbReference type="SwissPalm" id="Q8VDP6"/>
<dbReference type="jPOST" id="Q8VDP6"/>
<dbReference type="PaxDb" id="10090-ENSMUSP00000032920"/>
<dbReference type="PeptideAtlas" id="Q8VDP6"/>
<dbReference type="ProteomicsDB" id="281286"/>
<dbReference type="Pumba" id="Q8VDP6"/>
<dbReference type="Antibodypedia" id="26862">
    <property type="antibodies" value="70 antibodies from 17 providers"/>
</dbReference>
<dbReference type="DNASU" id="52858"/>
<dbReference type="Ensembl" id="ENSMUST00000032920.5">
    <property type="protein sequence ID" value="ENSMUSP00000032920.4"/>
    <property type="gene ID" value="ENSMUSG00000030682.5"/>
</dbReference>
<dbReference type="GeneID" id="52858"/>
<dbReference type="KEGG" id="mmu:52858"/>
<dbReference type="UCSC" id="uc009jtv.2">
    <property type="organism name" value="mouse"/>
</dbReference>
<dbReference type="AGR" id="MGI:105491"/>
<dbReference type="CTD" id="10423"/>
<dbReference type="MGI" id="MGI:105491">
    <property type="gene designation" value="Cdipt"/>
</dbReference>
<dbReference type="VEuPathDB" id="HostDB:ENSMUSG00000030682"/>
<dbReference type="eggNOG" id="KOG3240">
    <property type="taxonomic scope" value="Eukaryota"/>
</dbReference>
<dbReference type="GeneTree" id="ENSGT00940000154169"/>
<dbReference type="HOGENOM" id="CLU_067602_2_0_1"/>
<dbReference type="InParanoid" id="Q8VDP6"/>
<dbReference type="OMA" id="AQTYSEN"/>
<dbReference type="PhylomeDB" id="Q8VDP6"/>
<dbReference type="TreeFam" id="TF314603"/>
<dbReference type="Reactome" id="R-MMU-1483226">
    <property type="pathway name" value="Synthesis of PI"/>
</dbReference>
<dbReference type="BioGRID-ORCS" id="52858">
    <property type="hits" value="28 hits in 79 CRISPR screens"/>
</dbReference>
<dbReference type="CD-CODE" id="CE726F99">
    <property type="entry name" value="Postsynaptic density"/>
</dbReference>
<dbReference type="ChiTaRS" id="Cdipt">
    <property type="organism name" value="mouse"/>
</dbReference>
<dbReference type="PRO" id="PR:Q8VDP6"/>
<dbReference type="Proteomes" id="UP000000589">
    <property type="component" value="Chromosome 7"/>
</dbReference>
<dbReference type="RNAct" id="Q8VDP6">
    <property type="molecule type" value="protein"/>
</dbReference>
<dbReference type="Bgee" id="ENSMUSG00000030682">
    <property type="expression patterns" value="Expressed in paneth cell and 268 other cell types or tissues"/>
</dbReference>
<dbReference type="ExpressionAtlas" id="Q8VDP6">
    <property type="expression patterns" value="baseline and differential"/>
</dbReference>
<dbReference type="GO" id="GO:0005789">
    <property type="term" value="C:endoplasmic reticulum membrane"/>
    <property type="evidence" value="ECO:0007669"/>
    <property type="project" value="UniProtKB-SubCell"/>
</dbReference>
<dbReference type="GO" id="GO:0016020">
    <property type="term" value="C:membrane"/>
    <property type="evidence" value="ECO:0000250"/>
    <property type="project" value="UniProtKB"/>
</dbReference>
<dbReference type="GO" id="GO:0005886">
    <property type="term" value="C:plasma membrane"/>
    <property type="evidence" value="ECO:0007669"/>
    <property type="project" value="UniProtKB-SubCell"/>
</dbReference>
<dbReference type="GO" id="GO:0043178">
    <property type="term" value="F:alcohol binding"/>
    <property type="evidence" value="ECO:0007669"/>
    <property type="project" value="Ensembl"/>
</dbReference>
<dbReference type="GO" id="GO:0030246">
    <property type="term" value="F:carbohydrate binding"/>
    <property type="evidence" value="ECO:0007669"/>
    <property type="project" value="Ensembl"/>
</dbReference>
<dbReference type="GO" id="GO:0003881">
    <property type="term" value="F:CDP-diacylglycerol-inositol 3-phosphatidyltransferase activity"/>
    <property type="evidence" value="ECO:0000250"/>
    <property type="project" value="UniProtKB"/>
</dbReference>
<dbReference type="GO" id="GO:0019992">
    <property type="term" value="F:diacylglycerol binding"/>
    <property type="evidence" value="ECO:0007669"/>
    <property type="project" value="Ensembl"/>
</dbReference>
<dbReference type="GO" id="GO:0030145">
    <property type="term" value="F:manganese ion binding"/>
    <property type="evidence" value="ECO:0007669"/>
    <property type="project" value="Ensembl"/>
</dbReference>
<dbReference type="GO" id="GO:0046341">
    <property type="term" value="P:CDP-diacylglycerol metabolic process"/>
    <property type="evidence" value="ECO:0007669"/>
    <property type="project" value="Ensembl"/>
</dbReference>
<dbReference type="GO" id="GO:0006661">
    <property type="term" value="P:phosphatidylinositol biosynthetic process"/>
    <property type="evidence" value="ECO:0000250"/>
    <property type="project" value="UniProtKB"/>
</dbReference>
<dbReference type="FunFam" id="1.20.120.1760:FF:000003">
    <property type="entry name" value="CDP-diacylglycerol--inositol 3-phosphatidyltransferase"/>
    <property type="match status" value="1"/>
</dbReference>
<dbReference type="Gene3D" id="1.20.120.1760">
    <property type="match status" value="1"/>
</dbReference>
<dbReference type="InterPro" id="IPR000462">
    <property type="entry name" value="CDP-OH_P_trans"/>
</dbReference>
<dbReference type="InterPro" id="IPR043130">
    <property type="entry name" value="CDP-OH_PTrfase_TM_dom"/>
</dbReference>
<dbReference type="InterPro" id="IPR048254">
    <property type="entry name" value="CDP_ALCOHOL_P_TRANSF_CS"/>
</dbReference>
<dbReference type="InterPro" id="IPR014387">
    <property type="entry name" value="CDP_diag_ino_3_P_euk"/>
</dbReference>
<dbReference type="PANTHER" id="PTHR15362:SF4">
    <property type="entry name" value="CDP-DIACYLGLYCEROL--INOSITOL 3-PHOSPHATIDYLTRANSFERASE"/>
    <property type="match status" value="1"/>
</dbReference>
<dbReference type="PANTHER" id="PTHR15362">
    <property type="entry name" value="PHOSPHATIDYLINOSITOL SYNTHASE"/>
    <property type="match status" value="1"/>
</dbReference>
<dbReference type="Pfam" id="PF01066">
    <property type="entry name" value="CDP-OH_P_transf"/>
    <property type="match status" value="1"/>
</dbReference>
<dbReference type="PIRSF" id="PIRSF000848">
    <property type="entry name" value="CDP_diag_ino_3_P"/>
    <property type="match status" value="1"/>
</dbReference>
<dbReference type="PROSITE" id="PS00379">
    <property type="entry name" value="CDP_ALCOHOL_P_TRANSF"/>
    <property type="match status" value="1"/>
</dbReference>
<reference key="1">
    <citation type="journal article" date="2005" name="Science">
        <title>The transcriptional landscape of the mammalian genome.</title>
        <authorList>
            <person name="Carninci P."/>
            <person name="Kasukawa T."/>
            <person name="Katayama S."/>
            <person name="Gough J."/>
            <person name="Frith M.C."/>
            <person name="Maeda N."/>
            <person name="Oyama R."/>
            <person name="Ravasi T."/>
            <person name="Lenhard B."/>
            <person name="Wells C."/>
            <person name="Kodzius R."/>
            <person name="Shimokawa K."/>
            <person name="Bajic V.B."/>
            <person name="Brenner S.E."/>
            <person name="Batalov S."/>
            <person name="Forrest A.R."/>
            <person name="Zavolan M."/>
            <person name="Davis M.J."/>
            <person name="Wilming L.G."/>
            <person name="Aidinis V."/>
            <person name="Allen J.E."/>
            <person name="Ambesi-Impiombato A."/>
            <person name="Apweiler R."/>
            <person name="Aturaliya R.N."/>
            <person name="Bailey T.L."/>
            <person name="Bansal M."/>
            <person name="Baxter L."/>
            <person name="Beisel K.W."/>
            <person name="Bersano T."/>
            <person name="Bono H."/>
            <person name="Chalk A.M."/>
            <person name="Chiu K.P."/>
            <person name="Choudhary V."/>
            <person name="Christoffels A."/>
            <person name="Clutterbuck D.R."/>
            <person name="Crowe M.L."/>
            <person name="Dalla E."/>
            <person name="Dalrymple B.P."/>
            <person name="de Bono B."/>
            <person name="Della Gatta G."/>
            <person name="di Bernardo D."/>
            <person name="Down T."/>
            <person name="Engstrom P."/>
            <person name="Fagiolini M."/>
            <person name="Faulkner G."/>
            <person name="Fletcher C.F."/>
            <person name="Fukushima T."/>
            <person name="Furuno M."/>
            <person name="Futaki S."/>
            <person name="Gariboldi M."/>
            <person name="Georgii-Hemming P."/>
            <person name="Gingeras T.R."/>
            <person name="Gojobori T."/>
            <person name="Green R.E."/>
            <person name="Gustincich S."/>
            <person name="Harbers M."/>
            <person name="Hayashi Y."/>
            <person name="Hensch T.K."/>
            <person name="Hirokawa N."/>
            <person name="Hill D."/>
            <person name="Huminiecki L."/>
            <person name="Iacono M."/>
            <person name="Ikeo K."/>
            <person name="Iwama A."/>
            <person name="Ishikawa T."/>
            <person name="Jakt M."/>
            <person name="Kanapin A."/>
            <person name="Katoh M."/>
            <person name="Kawasawa Y."/>
            <person name="Kelso J."/>
            <person name="Kitamura H."/>
            <person name="Kitano H."/>
            <person name="Kollias G."/>
            <person name="Krishnan S.P."/>
            <person name="Kruger A."/>
            <person name="Kummerfeld S.K."/>
            <person name="Kurochkin I.V."/>
            <person name="Lareau L.F."/>
            <person name="Lazarevic D."/>
            <person name="Lipovich L."/>
            <person name="Liu J."/>
            <person name="Liuni S."/>
            <person name="McWilliam S."/>
            <person name="Madan Babu M."/>
            <person name="Madera M."/>
            <person name="Marchionni L."/>
            <person name="Matsuda H."/>
            <person name="Matsuzawa S."/>
            <person name="Miki H."/>
            <person name="Mignone F."/>
            <person name="Miyake S."/>
            <person name="Morris K."/>
            <person name="Mottagui-Tabar S."/>
            <person name="Mulder N."/>
            <person name="Nakano N."/>
            <person name="Nakauchi H."/>
            <person name="Ng P."/>
            <person name="Nilsson R."/>
            <person name="Nishiguchi S."/>
            <person name="Nishikawa S."/>
            <person name="Nori F."/>
            <person name="Ohara O."/>
            <person name="Okazaki Y."/>
            <person name="Orlando V."/>
            <person name="Pang K.C."/>
            <person name="Pavan W.J."/>
            <person name="Pavesi G."/>
            <person name="Pesole G."/>
            <person name="Petrovsky N."/>
            <person name="Piazza S."/>
            <person name="Reed J."/>
            <person name="Reid J.F."/>
            <person name="Ring B.Z."/>
            <person name="Ringwald M."/>
            <person name="Rost B."/>
            <person name="Ruan Y."/>
            <person name="Salzberg S.L."/>
            <person name="Sandelin A."/>
            <person name="Schneider C."/>
            <person name="Schoenbach C."/>
            <person name="Sekiguchi K."/>
            <person name="Semple C.A."/>
            <person name="Seno S."/>
            <person name="Sessa L."/>
            <person name="Sheng Y."/>
            <person name="Shibata Y."/>
            <person name="Shimada H."/>
            <person name="Shimada K."/>
            <person name="Silva D."/>
            <person name="Sinclair B."/>
            <person name="Sperling S."/>
            <person name="Stupka E."/>
            <person name="Sugiura K."/>
            <person name="Sultana R."/>
            <person name="Takenaka Y."/>
            <person name="Taki K."/>
            <person name="Tammoja K."/>
            <person name="Tan S.L."/>
            <person name="Tang S."/>
            <person name="Taylor M.S."/>
            <person name="Tegner J."/>
            <person name="Teichmann S.A."/>
            <person name="Ueda H.R."/>
            <person name="van Nimwegen E."/>
            <person name="Verardo R."/>
            <person name="Wei C.L."/>
            <person name="Yagi K."/>
            <person name="Yamanishi H."/>
            <person name="Zabarovsky E."/>
            <person name="Zhu S."/>
            <person name="Zimmer A."/>
            <person name="Hide W."/>
            <person name="Bult C."/>
            <person name="Grimmond S.M."/>
            <person name="Teasdale R.D."/>
            <person name="Liu E.T."/>
            <person name="Brusic V."/>
            <person name="Quackenbush J."/>
            <person name="Wahlestedt C."/>
            <person name="Mattick J.S."/>
            <person name="Hume D.A."/>
            <person name="Kai C."/>
            <person name="Sasaki D."/>
            <person name="Tomaru Y."/>
            <person name="Fukuda S."/>
            <person name="Kanamori-Katayama M."/>
            <person name="Suzuki M."/>
            <person name="Aoki J."/>
            <person name="Arakawa T."/>
            <person name="Iida J."/>
            <person name="Imamura K."/>
            <person name="Itoh M."/>
            <person name="Kato T."/>
            <person name="Kawaji H."/>
            <person name="Kawagashira N."/>
            <person name="Kawashima T."/>
            <person name="Kojima M."/>
            <person name="Kondo S."/>
            <person name="Konno H."/>
            <person name="Nakano K."/>
            <person name="Ninomiya N."/>
            <person name="Nishio T."/>
            <person name="Okada M."/>
            <person name="Plessy C."/>
            <person name="Shibata K."/>
            <person name="Shiraki T."/>
            <person name="Suzuki S."/>
            <person name="Tagami M."/>
            <person name="Waki K."/>
            <person name="Watahiki A."/>
            <person name="Okamura-Oho Y."/>
            <person name="Suzuki H."/>
            <person name="Kawai J."/>
            <person name="Hayashizaki Y."/>
        </authorList>
    </citation>
    <scope>NUCLEOTIDE SEQUENCE [LARGE SCALE MRNA]</scope>
    <source>
        <strain>C57BL/6J</strain>
        <strain>NOD</strain>
        <tissue>Testis</tissue>
        <tissue>Thymus</tissue>
        <tissue>Urinary bladder</tissue>
    </source>
</reference>
<reference key="2">
    <citation type="journal article" date="2004" name="Genome Res.">
        <title>The status, quality, and expansion of the NIH full-length cDNA project: the Mammalian Gene Collection (MGC).</title>
        <authorList>
            <consortium name="The MGC Project Team"/>
        </authorList>
    </citation>
    <scope>NUCLEOTIDE SEQUENCE [LARGE SCALE MRNA]</scope>
    <source>
        <strain>FVB/N</strain>
        <tissue>Kidney</tissue>
        <tissue>Mammary tumor</tissue>
    </source>
</reference>
<reference key="3">
    <citation type="submission" date="2007-04" db="UniProtKB">
        <authorList>
            <person name="Lubec G."/>
            <person name="Kang S.U."/>
        </authorList>
    </citation>
    <scope>PROTEIN SEQUENCE OF 63-73 AND 122-132</scope>
    <scope>IDENTIFICATION BY MASS SPECTROMETRY</scope>
    <source>
        <strain>C57BL/6J</strain>
        <tissue>Brain</tissue>
    </source>
</reference>
<reference key="4">
    <citation type="journal article" date="2010" name="Cell">
        <title>A tissue-specific atlas of mouse protein phosphorylation and expression.</title>
        <authorList>
            <person name="Huttlin E.L."/>
            <person name="Jedrychowski M.P."/>
            <person name="Elias J.E."/>
            <person name="Goswami T."/>
            <person name="Rad R."/>
            <person name="Beausoleil S.A."/>
            <person name="Villen J."/>
            <person name="Haas W."/>
            <person name="Sowa M.E."/>
            <person name="Gygi S.P."/>
        </authorList>
    </citation>
    <scope>IDENTIFICATION BY MASS SPECTROMETRY [LARGE SCALE ANALYSIS]</scope>
    <source>
        <tissue>Brain</tissue>
        <tissue>Heart</tissue>
        <tissue>Kidney</tissue>
        <tissue>Liver</tissue>
        <tissue>Lung</tissue>
        <tissue>Pancreas</tissue>
        <tissue>Spleen</tissue>
        <tissue>Testis</tissue>
    </source>
</reference>